<evidence type="ECO:0000255" key="1">
    <source>
        <dbReference type="HAMAP-Rule" id="MF_01318"/>
    </source>
</evidence>
<evidence type="ECO:0000305" key="2"/>
<organism>
    <name type="scientific">Acidovorax ebreus (strain TPSY)</name>
    <name type="common">Diaphorobacter sp. (strain TPSY)</name>
    <dbReference type="NCBI Taxonomy" id="535289"/>
    <lineage>
        <taxon>Bacteria</taxon>
        <taxon>Pseudomonadati</taxon>
        <taxon>Pseudomonadota</taxon>
        <taxon>Betaproteobacteria</taxon>
        <taxon>Burkholderiales</taxon>
        <taxon>Comamonadaceae</taxon>
        <taxon>Diaphorobacter</taxon>
    </lineage>
</organism>
<protein>
    <recommendedName>
        <fullName evidence="1">Large ribosomal subunit protein uL1</fullName>
    </recommendedName>
    <alternativeName>
        <fullName evidence="2">50S ribosomal protein L1</fullName>
    </alternativeName>
</protein>
<keyword id="KW-1185">Reference proteome</keyword>
<keyword id="KW-0678">Repressor</keyword>
<keyword id="KW-0687">Ribonucleoprotein</keyword>
<keyword id="KW-0689">Ribosomal protein</keyword>
<keyword id="KW-0694">RNA-binding</keyword>
<keyword id="KW-0699">rRNA-binding</keyword>
<keyword id="KW-0810">Translation regulation</keyword>
<keyword id="KW-0820">tRNA-binding</keyword>
<name>RL1_ACIET</name>
<reference key="1">
    <citation type="submission" date="2009-01" db="EMBL/GenBank/DDBJ databases">
        <title>Complete sequence of Diaphorobacter sp. TPSY.</title>
        <authorList>
            <consortium name="US DOE Joint Genome Institute"/>
            <person name="Lucas S."/>
            <person name="Copeland A."/>
            <person name="Lapidus A."/>
            <person name="Glavina del Rio T."/>
            <person name="Tice H."/>
            <person name="Bruce D."/>
            <person name="Goodwin L."/>
            <person name="Pitluck S."/>
            <person name="Chertkov O."/>
            <person name="Brettin T."/>
            <person name="Detter J.C."/>
            <person name="Han C."/>
            <person name="Larimer F."/>
            <person name="Land M."/>
            <person name="Hauser L."/>
            <person name="Kyrpides N."/>
            <person name="Mikhailova N."/>
            <person name="Coates J.D."/>
        </authorList>
    </citation>
    <scope>NUCLEOTIDE SEQUENCE [LARGE SCALE GENOMIC DNA]</scope>
    <source>
        <strain>TPSY</strain>
    </source>
</reference>
<feature type="chain" id="PRO_1000165677" description="Large ribosomal subunit protein uL1">
    <location>
        <begin position="1"/>
        <end position="231"/>
    </location>
</feature>
<gene>
    <name evidence="1" type="primary">rplA</name>
    <name type="ordered locus">Dtpsy_3249</name>
</gene>
<comment type="function">
    <text evidence="1">Binds directly to 23S rRNA. The L1 stalk is quite mobile in the ribosome, and is involved in E site tRNA release.</text>
</comment>
<comment type="function">
    <text evidence="1">Protein L1 is also a translational repressor protein, it controls the translation of the L11 operon by binding to its mRNA.</text>
</comment>
<comment type="subunit">
    <text evidence="1">Part of the 50S ribosomal subunit.</text>
</comment>
<comment type="similarity">
    <text evidence="1">Belongs to the universal ribosomal protein uL1 family.</text>
</comment>
<accession>B9MH50</accession>
<sequence length="231" mass="23852">MAKLTKKQKALQGKVDSTKLYAFAEAVALVKEAATAKFDESIDVAVQLGVDAKKSDQVVRGAVVLPNGTGKTTRVAVFAQGAKAEEAKAAGADIVGMDDLAAQVKAGDMPFDVVIAAPDAMRVVGTLGQILGPRGLMPNPKVGTVTPDVATAVKNAKAGQVQFRVDKAGIVHSTIGRRSFDNDKLQGNLAALIEALNKAKPATSKGVYLRKVAVSSTMGVGVRVDTQTIAA</sequence>
<proteinExistence type="inferred from homology"/>
<dbReference type="EMBL" id="CP001392">
    <property type="protein sequence ID" value="ACM34678.1"/>
    <property type="molecule type" value="Genomic_DNA"/>
</dbReference>
<dbReference type="RefSeq" id="WP_011806987.1">
    <property type="nucleotide sequence ID" value="NC_011992.1"/>
</dbReference>
<dbReference type="SMR" id="B9MH50"/>
<dbReference type="GeneID" id="84683778"/>
<dbReference type="KEGG" id="dia:Dtpsy_3249"/>
<dbReference type="eggNOG" id="COG0081">
    <property type="taxonomic scope" value="Bacteria"/>
</dbReference>
<dbReference type="HOGENOM" id="CLU_062853_0_0_4"/>
<dbReference type="Proteomes" id="UP000000450">
    <property type="component" value="Chromosome"/>
</dbReference>
<dbReference type="GO" id="GO:0022625">
    <property type="term" value="C:cytosolic large ribosomal subunit"/>
    <property type="evidence" value="ECO:0007669"/>
    <property type="project" value="TreeGrafter"/>
</dbReference>
<dbReference type="GO" id="GO:0019843">
    <property type="term" value="F:rRNA binding"/>
    <property type="evidence" value="ECO:0007669"/>
    <property type="project" value="UniProtKB-UniRule"/>
</dbReference>
<dbReference type="GO" id="GO:0003735">
    <property type="term" value="F:structural constituent of ribosome"/>
    <property type="evidence" value="ECO:0007669"/>
    <property type="project" value="InterPro"/>
</dbReference>
<dbReference type="GO" id="GO:0000049">
    <property type="term" value="F:tRNA binding"/>
    <property type="evidence" value="ECO:0007669"/>
    <property type="project" value="UniProtKB-KW"/>
</dbReference>
<dbReference type="GO" id="GO:0006417">
    <property type="term" value="P:regulation of translation"/>
    <property type="evidence" value="ECO:0007669"/>
    <property type="project" value="UniProtKB-KW"/>
</dbReference>
<dbReference type="GO" id="GO:0006412">
    <property type="term" value="P:translation"/>
    <property type="evidence" value="ECO:0007669"/>
    <property type="project" value="UniProtKB-UniRule"/>
</dbReference>
<dbReference type="CDD" id="cd00403">
    <property type="entry name" value="Ribosomal_L1"/>
    <property type="match status" value="1"/>
</dbReference>
<dbReference type="FunFam" id="3.40.50.790:FF:000001">
    <property type="entry name" value="50S ribosomal protein L1"/>
    <property type="match status" value="1"/>
</dbReference>
<dbReference type="Gene3D" id="3.30.190.20">
    <property type="match status" value="1"/>
</dbReference>
<dbReference type="Gene3D" id="3.40.50.790">
    <property type="match status" value="1"/>
</dbReference>
<dbReference type="HAMAP" id="MF_01318_B">
    <property type="entry name" value="Ribosomal_uL1_B"/>
    <property type="match status" value="1"/>
</dbReference>
<dbReference type="InterPro" id="IPR005878">
    <property type="entry name" value="Ribosom_uL1_bac-type"/>
</dbReference>
<dbReference type="InterPro" id="IPR002143">
    <property type="entry name" value="Ribosomal_uL1"/>
</dbReference>
<dbReference type="InterPro" id="IPR023674">
    <property type="entry name" value="Ribosomal_uL1-like"/>
</dbReference>
<dbReference type="InterPro" id="IPR028364">
    <property type="entry name" value="Ribosomal_uL1/biogenesis"/>
</dbReference>
<dbReference type="InterPro" id="IPR016095">
    <property type="entry name" value="Ribosomal_uL1_3-a/b-sand"/>
</dbReference>
<dbReference type="InterPro" id="IPR023673">
    <property type="entry name" value="Ribosomal_uL1_CS"/>
</dbReference>
<dbReference type="NCBIfam" id="TIGR01169">
    <property type="entry name" value="rplA_bact"/>
    <property type="match status" value="1"/>
</dbReference>
<dbReference type="PANTHER" id="PTHR36427">
    <property type="entry name" value="54S RIBOSOMAL PROTEIN L1, MITOCHONDRIAL"/>
    <property type="match status" value="1"/>
</dbReference>
<dbReference type="PANTHER" id="PTHR36427:SF3">
    <property type="entry name" value="LARGE RIBOSOMAL SUBUNIT PROTEIN UL1M"/>
    <property type="match status" value="1"/>
</dbReference>
<dbReference type="Pfam" id="PF00687">
    <property type="entry name" value="Ribosomal_L1"/>
    <property type="match status" value="1"/>
</dbReference>
<dbReference type="PIRSF" id="PIRSF002155">
    <property type="entry name" value="Ribosomal_L1"/>
    <property type="match status" value="1"/>
</dbReference>
<dbReference type="SUPFAM" id="SSF56808">
    <property type="entry name" value="Ribosomal protein L1"/>
    <property type="match status" value="1"/>
</dbReference>
<dbReference type="PROSITE" id="PS01199">
    <property type="entry name" value="RIBOSOMAL_L1"/>
    <property type="match status" value="1"/>
</dbReference>